<feature type="chain" id="PRO_0000076760" description="3-isopropylmalate dehydratase large subunit 1">
    <location>
        <begin position="1"/>
        <end position="475"/>
    </location>
</feature>
<feature type="binding site" evidence="1">
    <location>
        <position position="353"/>
    </location>
    <ligand>
        <name>[4Fe-4S] cluster</name>
        <dbReference type="ChEBI" id="CHEBI:49883"/>
    </ligand>
</feature>
<feature type="binding site" evidence="1">
    <location>
        <position position="413"/>
    </location>
    <ligand>
        <name>[4Fe-4S] cluster</name>
        <dbReference type="ChEBI" id="CHEBI:49883"/>
    </ligand>
</feature>
<feature type="binding site" evidence="1">
    <location>
        <position position="416"/>
    </location>
    <ligand>
        <name>[4Fe-4S] cluster</name>
        <dbReference type="ChEBI" id="CHEBI:49883"/>
    </ligand>
</feature>
<protein>
    <recommendedName>
        <fullName evidence="1">3-isopropylmalate dehydratase large subunit 1</fullName>
        <ecNumber evidence="1">4.2.1.33</ecNumber>
    </recommendedName>
    <alternativeName>
        <fullName evidence="1">Alpha-IPM isomerase 1</fullName>
        <shortName evidence="1">IPMI 1</shortName>
    </alternativeName>
    <alternativeName>
        <fullName evidence="1">Isopropylmalate isomerase 1</fullName>
    </alternativeName>
</protein>
<proteinExistence type="inferred from homology"/>
<dbReference type="EC" id="4.2.1.33" evidence="1"/>
<dbReference type="EMBL" id="AE016827">
    <property type="protein sequence ID" value="AAU36940.1"/>
    <property type="molecule type" value="Genomic_DNA"/>
</dbReference>
<dbReference type="SMR" id="Q65VS0"/>
<dbReference type="STRING" id="221988.MS0333"/>
<dbReference type="KEGG" id="msu:MS0333"/>
<dbReference type="eggNOG" id="COG0065">
    <property type="taxonomic scope" value="Bacteria"/>
</dbReference>
<dbReference type="HOGENOM" id="CLU_006714_3_4_6"/>
<dbReference type="UniPathway" id="UPA00048">
    <property type="reaction ID" value="UER00071"/>
</dbReference>
<dbReference type="Proteomes" id="UP000000607">
    <property type="component" value="Chromosome"/>
</dbReference>
<dbReference type="GO" id="GO:0003861">
    <property type="term" value="F:3-isopropylmalate dehydratase activity"/>
    <property type="evidence" value="ECO:0007669"/>
    <property type="project" value="UniProtKB-UniRule"/>
</dbReference>
<dbReference type="GO" id="GO:0051539">
    <property type="term" value="F:4 iron, 4 sulfur cluster binding"/>
    <property type="evidence" value="ECO:0007669"/>
    <property type="project" value="UniProtKB-KW"/>
</dbReference>
<dbReference type="GO" id="GO:0046872">
    <property type="term" value="F:metal ion binding"/>
    <property type="evidence" value="ECO:0007669"/>
    <property type="project" value="UniProtKB-KW"/>
</dbReference>
<dbReference type="GO" id="GO:0009098">
    <property type="term" value="P:L-leucine biosynthetic process"/>
    <property type="evidence" value="ECO:0007669"/>
    <property type="project" value="UniProtKB-UniRule"/>
</dbReference>
<dbReference type="CDD" id="cd01583">
    <property type="entry name" value="IPMI"/>
    <property type="match status" value="1"/>
</dbReference>
<dbReference type="FunFam" id="3.30.499.10:FF:000007">
    <property type="entry name" value="3-isopropylmalate dehydratase large subunit"/>
    <property type="match status" value="1"/>
</dbReference>
<dbReference type="Gene3D" id="3.30.499.10">
    <property type="entry name" value="Aconitase, domain 3"/>
    <property type="match status" value="2"/>
</dbReference>
<dbReference type="HAMAP" id="MF_01026">
    <property type="entry name" value="LeuC_type1"/>
    <property type="match status" value="1"/>
</dbReference>
<dbReference type="InterPro" id="IPR004430">
    <property type="entry name" value="3-IsopropMal_deHydase_lsu"/>
</dbReference>
<dbReference type="InterPro" id="IPR015931">
    <property type="entry name" value="Acnase/IPM_dHydase_lsu_aba_1/3"/>
</dbReference>
<dbReference type="InterPro" id="IPR001030">
    <property type="entry name" value="Acoase/IPM_deHydtase_lsu_aba"/>
</dbReference>
<dbReference type="InterPro" id="IPR018136">
    <property type="entry name" value="Aconitase_4Fe-4S_BS"/>
</dbReference>
<dbReference type="InterPro" id="IPR036008">
    <property type="entry name" value="Aconitase_4Fe-4S_dom"/>
</dbReference>
<dbReference type="InterPro" id="IPR050067">
    <property type="entry name" value="IPM_dehydratase_rel_enz"/>
</dbReference>
<dbReference type="InterPro" id="IPR033941">
    <property type="entry name" value="IPMI_cat"/>
</dbReference>
<dbReference type="NCBIfam" id="TIGR00170">
    <property type="entry name" value="leuC"/>
    <property type="match status" value="1"/>
</dbReference>
<dbReference type="NCBIfam" id="NF004016">
    <property type="entry name" value="PRK05478.1"/>
    <property type="match status" value="1"/>
</dbReference>
<dbReference type="NCBIfam" id="NF009116">
    <property type="entry name" value="PRK12466.1"/>
    <property type="match status" value="1"/>
</dbReference>
<dbReference type="PANTHER" id="PTHR43822:SF9">
    <property type="entry name" value="3-ISOPROPYLMALATE DEHYDRATASE"/>
    <property type="match status" value="1"/>
</dbReference>
<dbReference type="PANTHER" id="PTHR43822">
    <property type="entry name" value="HOMOACONITASE, MITOCHONDRIAL-RELATED"/>
    <property type="match status" value="1"/>
</dbReference>
<dbReference type="Pfam" id="PF00330">
    <property type="entry name" value="Aconitase"/>
    <property type="match status" value="1"/>
</dbReference>
<dbReference type="PRINTS" id="PR00415">
    <property type="entry name" value="ACONITASE"/>
</dbReference>
<dbReference type="SUPFAM" id="SSF53732">
    <property type="entry name" value="Aconitase iron-sulfur domain"/>
    <property type="match status" value="1"/>
</dbReference>
<dbReference type="PROSITE" id="PS00450">
    <property type="entry name" value="ACONITASE_1"/>
    <property type="match status" value="1"/>
</dbReference>
<dbReference type="PROSITE" id="PS01244">
    <property type="entry name" value="ACONITASE_2"/>
    <property type="match status" value="1"/>
</dbReference>
<sequence length="475" mass="52117">MENAMSKTLYDKHIDSHTIKELDNEGNVLLYIDRTILNEYTSPQAFSGLREENRDVWNKKSILLNVDHVNPTRPVRDANMTDPGGTLQVNYFRENSKLFDIELFDVTDPRQGIEHVVAHEQGLALPGMVIAAGDSHTTTYGAFGAFGFGIGTSEIEHLLATQTLVYKKLKNMRVTLTGKLPFGTTAKDVIMALVAKIGADGATNYAIEFCGEVIDELSVEGRMTICNMAVECGARGAFMAPDEKVYEYIKGTPRAPKGEMWDLAIAEWRKLKSDNDAVFDKEIHMDCSDLEPFVTWGISPDQADVISGEVPDPNLLPEGQKRKDYQAALEYMGLEPGMKFEEIKISHAFIGSCTNGRIEDLREVAKVLKGRKIAQGVRGMIIPGSTQVRARAEAEGLAKIFIDAGFEWRQSGCSMCLAMNEDVLSPGDRCASGTNRNFAGRQGAGSRTHLMSPAMVAAAAVAGHLVDVRKFVEGD</sequence>
<accession>Q65VS0</accession>
<reference key="1">
    <citation type="journal article" date="2004" name="Nat. Biotechnol.">
        <title>The genome sequence of the capnophilic rumen bacterium Mannheimia succiniciproducens.</title>
        <authorList>
            <person name="Hong S.H."/>
            <person name="Kim J.S."/>
            <person name="Lee S.Y."/>
            <person name="In Y.H."/>
            <person name="Choi S.S."/>
            <person name="Rih J.-K."/>
            <person name="Kim C.H."/>
            <person name="Jeong H."/>
            <person name="Hur C.G."/>
            <person name="Kim J.J."/>
        </authorList>
    </citation>
    <scope>NUCLEOTIDE SEQUENCE [LARGE SCALE GENOMIC DNA]</scope>
    <source>
        <strain>KCTC 0769BP / MBEL55E</strain>
    </source>
</reference>
<comment type="function">
    <text evidence="1">Catalyzes the isomerization between 2-isopropylmalate and 3-isopropylmalate, via the formation of 2-isopropylmaleate.</text>
</comment>
<comment type="catalytic activity">
    <reaction evidence="1">
        <text>(2R,3S)-3-isopropylmalate = (2S)-2-isopropylmalate</text>
        <dbReference type="Rhea" id="RHEA:32287"/>
        <dbReference type="ChEBI" id="CHEBI:1178"/>
        <dbReference type="ChEBI" id="CHEBI:35121"/>
        <dbReference type="EC" id="4.2.1.33"/>
    </reaction>
</comment>
<comment type="cofactor">
    <cofactor evidence="1">
        <name>[4Fe-4S] cluster</name>
        <dbReference type="ChEBI" id="CHEBI:49883"/>
    </cofactor>
    <text evidence="1">Binds 1 [4Fe-4S] cluster per subunit.</text>
</comment>
<comment type="pathway">
    <text evidence="1">Amino-acid biosynthesis; L-leucine biosynthesis; L-leucine from 3-methyl-2-oxobutanoate: step 2/4.</text>
</comment>
<comment type="subunit">
    <text evidence="1">Heterodimer of LeuC and LeuD.</text>
</comment>
<comment type="similarity">
    <text evidence="1">Belongs to the aconitase/IPM isomerase family. LeuC type 1 subfamily.</text>
</comment>
<gene>
    <name evidence="1" type="primary">leuC1</name>
    <name type="ordered locus">MS0333</name>
</gene>
<organism>
    <name type="scientific">Mannheimia succiniciproducens (strain KCTC 0769BP / MBEL55E)</name>
    <dbReference type="NCBI Taxonomy" id="221988"/>
    <lineage>
        <taxon>Bacteria</taxon>
        <taxon>Pseudomonadati</taxon>
        <taxon>Pseudomonadota</taxon>
        <taxon>Gammaproteobacteria</taxon>
        <taxon>Pasteurellales</taxon>
        <taxon>Pasteurellaceae</taxon>
        <taxon>Basfia</taxon>
    </lineage>
</organism>
<keyword id="KW-0004">4Fe-4S</keyword>
<keyword id="KW-0028">Amino-acid biosynthesis</keyword>
<keyword id="KW-0100">Branched-chain amino acid biosynthesis</keyword>
<keyword id="KW-0408">Iron</keyword>
<keyword id="KW-0411">Iron-sulfur</keyword>
<keyword id="KW-0432">Leucine biosynthesis</keyword>
<keyword id="KW-0456">Lyase</keyword>
<keyword id="KW-0479">Metal-binding</keyword>
<name>LEUC1_MANSM</name>
<evidence type="ECO:0000255" key="1">
    <source>
        <dbReference type="HAMAP-Rule" id="MF_01026"/>
    </source>
</evidence>